<dbReference type="EMBL" id="AF148805">
    <property type="protein sequence ID" value="AAD46505.1"/>
    <property type="molecule type" value="Genomic_DNA"/>
</dbReference>
<dbReference type="RefSeq" id="YP_001129435.1">
    <property type="nucleotide sequence ID" value="NC_009333.1"/>
</dbReference>
<dbReference type="PDB" id="7NXE">
    <property type="method" value="X-ray"/>
    <property type="resolution" value="2.10 A"/>
    <property type="chains" value="C/D=478-489"/>
</dbReference>
<dbReference type="PDBsum" id="7NXE"/>
<dbReference type="SMR" id="Q9QR69"/>
<dbReference type="GeneID" id="4961473"/>
<dbReference type="KEGG" id="vg:4961473"/>
<dbReference type="Proteomes" id="UP000000942">
    <property type="component" value="Segment"/>
</dbReference>
<dbReference type="GO" id="GO:0044177">
    <property type="term" value="C:host cell Golgi apparatus"/>
    <property type="evidence" value="ECO:0007669"/>
    <property type="project" value="UniProtKB-SubCell"/>
</dbReference>
<dbReference type="GO" id="GO:0020002">
    <property type="term" value="C:host cell plasma membrane"/>
    <property type="evidence" value="ECO:0007669"/>
    <property type="project" value="UniProtKB-SubCell"/>
</dbReference>
<dbReference type="GO" id="GO:0016020">
    <property type="term" value="C:membrane"/>
    <property type="evidence" value="ECO:0007669"/>
    <property type="project" value="UniProtKB-KW"/>
</dbReference>
<dbReference type="InterPro" id="IPR009304">
    <property type="entry name" value="Herpes_LAMP2"/>
</dbReference>
<dbReference type="Pfam" id="PF06126">
    <property type="entry name" value="Herpes_LAMP2"/>
    <property type="match status" value="1"/>
</dbReference>
<sequence>MKTLIFFWNLWLWALLVCFWCITLVCVTTNSIDTMASLLVMCILFVSAINKYTQAISSNNPKWPSSWHLGIIACIVLKLWNLSTTNSVTYACLITTAILSLVTAFLTLIKHCTACKLQLEHGILFTSTFAVLMTNMLVHMSNTWQSSWIFFPISFTLSLPFLYAFATVKTGNIKLVSSVSFICAGLVMGYPVSCCKTHTCTATAAGLSLSSIYLGFTGIISTLHKSWAPPKRGILTFLLLQGGVLTTQTLTTELLAITSTTGNIKGHEILLLVCLIFLWCLYVWQSFNKASLVTGMLHLIAAWSHTGGCVQLVMLLPSGLTRGILTMIICISTLFSTLQGLLVFYLYKEKKVVAVNSYRQRRRRIYTRDQNLHHNDNHLGNNVISPPPLPPFFRQPVRLPSHVTDRGRGSQLLNEVELQEVNRDPPNVFGYASILVSGAEESREPSPQPDQSGMSILRVDGGSAFRIDTAQAATQPTDDLYEEVLFPRN</sequence>
<comment type="function">
    <text evidence="2 4 5 6 8">Plays a crucial role for reactivation of the virus from latency, early viral gene expression and virus production. Modulates host signaling pathways including activation of MAP kinases c-JUN-N-terminal kinase (JNK), ERK2, and NF-kappa-B resulting in the activation of AP-1 and NFAT-dependent gene expression in B-lymphocytes. When expressed in epithelial cells, induces the expression of several inflammatory and angiogenic genes. Also interferes with B-lymphocytes signaling through interaction with host LYN kinase.</text>
</comment>
<comment type="subunit">
    <text evidence="3 4">Interacts with host LYN; this interaction modulates B-cells signaling. Interacts with host ITSN2.</text>
</comment>
<comment type="subcellular location">
    <subcellularLocation>
        <location evidence="7 8">Host cell membrane</location>
        <topology evidence="9">Multi-pass membrane protein</topology>
    </subcellularLocation>
    <subcellularLocation>
        <location evidence="7 8">Host Golgi apparatus</location>
        <location evidence="7 8">Host trans-Golgi network</location>
    </subcellularLocation>
    <text evidence="7">Localizes to the trans-Golgi network (TGN) compartment during latency and relocalizes to the cell periphery when the lytic program is induced.</text>
</comment>
<organism>
    <name type="scientific">Human herpesvirus 8 type P (isolate GK18)</name>
    <name type="common">HHV-8</name>
    <name type="synonym">Kaposi's sarcoma-associated herpesvirus</name>
    <dbReference type="NCBI Taxonomy" id="868565"/>
    <lineage>
        <taxon>Viruses</taxon>
        <taxon>Duplodnaviria</taxon>
        <taxon>Heunggongvirae</taxon>
        <taxon>Peploviricota</taxon>
        <taxon>Herviviricetes</taxon>
        <taxon>Herpesvirales</taxon>
        <taxon>Orthoherpesviridae</taxon>
        <taxon>Gammaherpesvirinae</taxon>
        <taxon>Rhadinovirus</taxon>
        <taxon>Rhadinovirus humangamma8</taxon>
        <taxon>Human herpesvirus 8</taxon>
    </lineage>
</organism>
<accession>Q9QR69</accession>
<protein>
    <recommendedName>
        <fullName>Protein K15</fullName>
    </recommendedName>
</protein>
<feature type="signal peptide" evidence="1">
    <location>
        <begin position="1"/>
        <end position="26"/>
    </location>
</feature>
<feature type="chain" id="PRO_0000423885" description="Protein K15">
    <location>
        <begin position="27"/>
        <end position="489"/>
    </location>
</feature>
<feature type="transmembrane region" description="Helical" evidence="1">
    <location>
        <begin position="29"/>
        <end position="49"/>
    </location>
</feature>
<feature type="transmembrane region" description="Helical" evidence="1">
    <location>
        <begin position="63"/>
        <end position="83"/>
    </location>
</feature>
<feature type="transmembrane region" description="Helical" evidence="1">
    <location>
        <begin position="89"/>
        <end position="109"/>
    </location>
</feature>
<feature type="transmembrane region" description="Helical" evidence="1">
    <location>
        <begin position="121"/>
        <end position="141"/>
    </location>
</feature>
<feature type="transmembrane region" description="Helical" evidence="1">
    <location>
        <begin position="148"/>
        <end position="168"/>
    </location>
</feature>
<feature type="transmembrane region" description="Helical" evidence="1">
    <location>
        <begin position="175"/>
        <end position="195"/>
    </location>
</feature>
<feature type="transmembrane region" description="Helical" evidence="1">
    <location>
        <begin position="200"/>
        <end position="220"/>
    </location>
</feature>
<feature type="transmembrane region" description="Helical" evidence="1">
    <location>
        <begin position="237"/>
        <end position="257"/>
    </location>
</feature>
<feature type="transmembrane region" description="Helical" evidence="1">
    <location>
        <begin position="264"/>
        <end position="284"/>
    </location>
</feature>
<feature type="transmembrane region" description="Helical" evidence="1">
    <location>
        <begin position="296"/>
        <end position="316"/>
    </location>
</feature>
<feature type="transmembrane region" description="Helical" evidence="1">
    <location>
        <begin position="324"/>
        <end position="344"/>
    </location>
</feature>
<gene>
    <name type="primary">K15</name>
</gene>
<organismHost>
    <name type="scientific">Homo sapiens</name>
    <name type="common">Human</name>
    <dbReference type="NCBI Taxonomy" id="9606"/>
</organismHost>
<keyword id="KW-0002">3D-structure</keyword>
<keyword id="KW-1032">Host cell membrane</keyword>
<keyword id="KW-1040">Host Golgi apparatus</keyword>
<keyword id="KW-1043">Host membrane</keyword>
<keyword id="KW-0945">Host-virus interaction</keyword>
<keyword id="KW-0472">Membrane</keyword>
<keyword id="KW-1185">Reference proteome</keyword>
<keyword id="KW-0732">Signal</keyword>
<keyword id="KW-0812">Transmembrane</keyword>
<keyword id="KW-1133">Transmembrane helix</keyword>
<evidence type="ECO:0000255" key="1"/>
<evidence type="ECO:0000269" key="2">
    <source>
    </source>
</evidence>
<evidence type="ECO:0000269" key="3">
    <source>
    </source>
</evidence>
<evidence type="ECO:0000269" key="4">
    <source>
    </source>
</evidence>
<evidence type="ECO:0000269" key="5">
    <source>
    </source>
</evidence>
<evidence type="ECO:0000269" key="6">
    <source>
    </source>
</evidence>
<evidence type="ECO:0000269" key="7">
    <source>
    </source>
</evidence>
<evidence type="ECO:0000269" key="8">
    <source>
    </source>
</evidence>
<evidence type="ECO:0000305" key="9"/>
<proteinExistence type="evidence at protein level"/>
<reference key="1">
    <citation type="journal article" date="1999" name="J. Virol.">
        <title>Identification of a spliced gene from Kaposi's sarcoma-associated herpesvirus encoding a protein with similarities to latent membrane proteins 1 and 2A of Epstein-Barr virus.</title>
        <authorList>
            <person name="Glenn M."/>
            <person name="Rainbow L."/>
            <person name="Aurade F."/>
            <person name="Davison A."/>
            <person name="Schulz T.F."/>
        </authorList>
    </citation>
    <scope>NUCLEOTIDE SEQUENCE [LARGE SCALE GENOMIC DNA]</scope>
</reference>
<reference key="2">
    <citation type="journal article" date="2006" name="J. Gen. Virol.">
        <title>Kaposi's sarcoma-associated herpesvirus immune modulation: an overview.</title>
        <authorList>
            <person name="Rezaee S.A.R."/>
            <person name="Cunningham C."/>
            <person name="Davison A.J."/>
            <person name="Blackbourn D.J."/>
        </authorList>
    </citation>
    <scope>NUCLEOTIDE SEQUENCE [LARGE SCALE GENOMIC DNA]</scope>
</reference>
<reference key="3">
    <citation type="journal article" date="2003" name="J. Virol.">
        <title>Activation of mitogen-activated protein kinase and NF-kappaB pathways by a Kaposi's sarcoma-associated herpesvirus K15 membrane protein.</title>
        <authorList>
            <person name="Brinkmann M.M."/>
            <person name="Glenn M."/>
            <person name="Rainbow L."/>
            <person name="Kieser A."/>
            <person name="Henke-Gendo C."/>
            <person name="Schulz T.F."/>
        </authorList>
    </citation>
    <scope>FUNCTION</scope>
    <scope>SUBCELLULAR LOCATION</scope>
</reference>
<reference key="4">
    <citation type="journal article" date="2007" name="Biochemistry">
        <title>The K15 protein of Kaposi's sarcoma-associated herpesvirus recruits the endocytic regulator intersectin 2 through a selective SH3 domain interaction.</title>
        <authorList>
            <person name="Lim C.S."/>
            <person name="Seet B.T."/>
            <person name="Ingham R.J."/>
            <person name="Gish G."/>
            <person name="Matskova L."/>
            <person name="Winberg G."/>
            <person name="Ernberg I."/>
            <person name="Pawson T."/>
        </authorList>
    </citation>
    <scope>INTERACTION WITH HOST ITSN2</scope>
</reference>
<reference key="5">
    <citation type="journal article" date="2008" name="Exp. Mol. Med.">
        <title>Multi-transmembrane protein K15 of Kaposi's sarcoma-associated herpesvirus targets Lyn kinase in the membrane raft and induces NFAT/AP1 activities.</title>
        <authorList>
            <person name="Cho N.H."/>
            <person name="Choi Y.K."/>
            <person name="Choi J.K."/>
        </authorList>
    </citation>
    <scope>FUNCTION</scope>
    <scope>INTERACTION WITH HOST LYN</scope>
</reference>
<reference key="6">
    <citation type="journal article" date="2010" name="J. Virol.">
        <title>Role of the Kaposi's sarcoma-associated herpesvirus K15 SH3 binding site in inflammatory signaling and B-cell activation.</title>
        <authorList>
            <person name="Pietrek M."/>
            <person name="Brinkmann M.M."/>
            <person name="Glowacka I."/>
            <person name="Enlund A."/>
            <person name="Havemeier A."/>
            <person name="Dittrich-Breiholz O."/>
            <person name="Kracht M."/>
            <person name="Lewitzky M."/>
            <person name="Saksela K."/>
            <person name="Feller S.M."/>
            <person name="Schulz T.F."/>
        </authorList>
    </citation>
    <scope>FUNCTION</scope>
</reference>
<reference key="7">
    <citation type="journal article" date="2012" name="PLoS Pathog.">
        <title>Kaposi's sarcoma herpesvirus K15 protein contributes to virus-induced angiogenesis by recruiting PLCgamma1 and activating NFAT1-dependent RCAN1 expression.</title>
        <authorList>
            <person name="Bala K."/>
            <person name="Bosco R."/>
            <person name="Gramolelli S."/>
            <person name="Haas D.A."/>
            <person name="Kati S."/>
            <person name="Pietrek M."/>
            <person name="Havemeier A."/>
            <person name="Yakushko Y."/>
            <person name="Singh V.V."/>
            <person name="Dittrich-Breiholz O."/>
            <person name="Kracht M."/>
            <person name="Schulz T.F."/>
        </authorList>
    </citation>
    <scope>FUNCTION</scope>
</reference>
<reference key="8">
    <citation type="journal article" date="2017" name="J. Virol.">
        <title>Expression and Subcellular Localization of the Kaposi's Sarcoma-Associated Herpesvirus K15P Protein during Latency and Lytic Reactivation in Primary Effusion Lymphoma Cells.</title>
        <authorList>
            <person name="Smith C.G."/>
            <person name="Kharkwal H."/>
            <person name="Wilson D.W."/>
        </authorList>
    </citation>
    <scope>SUBCELLULAR LOCATION</scope>
</reference>
<reference key="9">
    <citation type="journal article" date="2017" name="PLoS Pathog.">
        <title>The Kaposi's sarcoma-associated herpesvirus (KSHV) non-structural membrane protein K15 is required for viral lytic replication and may represent a therapeutic target.</title>
        <authorList>
            <person name="Abere B."/>
            <person name="Mamo T.M."/>
            <person name="Hartmann S."/>
            <person name="Samarina N."/>
            <person name="Hage E."/>
            <person name="Rueckert J."/>
            <person name="Hotop S.K."/>
            <person name="Buesche G."/>
            <person name="Schulz T.F."/>
        </authorList>
    </citation>
    <scope>FUNCTION</scope>
    <scope>SUBCELLULAR LOCATION</scope>
</reference>
<name>K15_HHV8P</name>